<accession>O55196</accession>
<feature type="signal peptide" evidence="3">
    <location>
        <begin position="1"/>
        <end position="38"/>
    </location>
</feature>
<feature type="chain" id="PRO_0000021175" description="Enamelin">
    <location>
        <begin position="39"/>
        <end position="1274"/>
    </location>
</feature>
<feature type="region of interest" description="Disordered" evidence="4">
    <location>
        <begin position="103"/>
        <end position="413"/>
    </location>
</feature>
<feature type="region of interest" description="Disordered" evidence="4">
    <location>
        <begin position="476"/>
        <end position="610"/>
    </location>
</feature>
<feature type="region of interest" description="Disordered" evidence="4">
    <location>
        <begin position="668"/>
        <end position="700"/>
    </location>
</feature>
<feature type="region of interest" description="Disordered" evidence="4">
    <location>
        <begin position="712"/>
        <end position="734"/>
    </location>
</feature>
<feature type="region of interest" description="Disordered" evidence="4">
    <location>
        <begin position="753"/>
        <end position="814"/>
    </location>
</feature>
<feature type="region of interest" description="Disordered" evidence="4">
    <location>
        <begin position="1071"/>
        <end position="1097"/>
    </location>
</feature>
<feature type="region of interest" description="Disordered" evidence="4">
    <location>
        <begin position="1109"/>
        <end position="1128"/>
    </location>
</feature>
<feature type="compositionally biased region" description="Pro residues" evidence="4">
    <location>
        <begin position="103"/>
        <end position="115"/>
    </location>
</feature>
<feature type="compositionally biased region" description="Polar residues" evidence="4">
    <location>
        <begin position="117"/>
        <end position="127"/>
    </location>
</feature>
<feature type="compositionally biased region" description="Low complexity" evidence="4">
    <location>
        <begin position="128"/>
        <end position="142"/>
    </location>
</feature>
<feature type="compositionally biased region" description="Basic and acidic residues" evidence="4">
    <location>
        <begin position="143"/>
        <end position="158"/>
    </location>
</feature>
<feature type="compositionally biased region" description="Pro residues" evidence="4">
    <location>
        <begin position="174"/>
        <end position="185"/>
    </location>
</feature>
<feature type="compositionally biased region" description="Basic and acidic residues" evidence="4">
    <location>
        <begin position="225"/>
        <end position="239"/>
    </location>
</feature>
<feature type="compositionally biased region" description="Polar residues" evidence="4">
    <location>
        <begin position="249"/>
        <end position="272"/>
    </location>
</feature>
<feature type="compositionally biased region" description="Low complexity" evidence="4">
    <location>
        <begin position="273"/>
        <end position="287"/>
    </location>
</feature>
<feature type="compositionally biased region" description="Low complexity" evidence="4">
    <location>
        <begin position="318"/>
        <end position="330"/>
    </location>
</feature>
<feature type="compositionally biased region" description="Polar residues" evidence="4">
    <location>
        <begin position="331"/>
        <end position="344"/>
    </location>
</feature>
<feature type="compositionally biased region" description="Polar residues" evidence="4">
    <location>
        <begin position="486"/>
        <end position="503"/>
    </location>
</feature>
<feature type="compositionally biased region" description="Polar residues" evidence="4">
    <location>
        <begin position="522"/>
        <end position="549"/>
    </location>
</feature>
<feature type="compositionally biased region" description="Polar residues" evidence="4">
    <location>
        <begin position="565"/>
        <end position="574"/>
    </location>
</feature>
<feature type="compositionally biased region" description="Basic and acidic residues" evidence="4">
    <location>
        <begin position="575"/>
        <end position="587"/>
    </location>
</feature>
<feature type="compositionally biased region" description="Polar residues" evidence="4">
    <location>
        <begin position="588"/>
        <end position="598"/>
    </location>
</feature>
<feature type="compositionally biased region" description="Basic and acidic residues" evidence="4">
    <location>
        <begin position="715"/>
        <end position="727"/>
    </location>
</feature>
<feature type="compositionally biased region" description="Polar residues" evidence="4">
    <location>
        <begin position="753"/>
        <end position="766"/>
    </location>
</feature>
<feature type="compositionally biased region" description="Acidic residues" evidence="4">
    <location>
        <begin position="787"/>
        <end position="801"/>
    </location>
</feature>
<feature type="modified residue" description="Phosphoserine" evidence="2">
    <location>
        <position position="196"/>
    </location>
</feature>
<feature type="modified residue" description="Phosphoserine" evidence="2">
    <location>
        <position position="219"/>
    </location>
</feature>
<feature type="glycosylation site" description="N-linked (GlcNAc...) asparagine" evidence="3">
    <location>
        <position position="130"/>
    </location>
</feature>
<feature type="glycosylation site" description="N-linked (GlcNAc...) asparagine" evidence="3">
    <location>
        <position position="252"/>
    </location>
</feature>
<feature type="glycosylation site" description="N-linked (GlcNAc...) asparagine" evidence="3">
    <location>
        <position position="259"/>
    </location>
</feature>
<feature type="glycosylation site" description="N-linked (GlcNAc...) asparagine" evidence="3">
    <location>
        <position position="269"/>
    </location>
</feature>
<feature type="glycosylation site" description="N-linked (GlcNAc...) asparagine" evidence="3">
    <location>
        <position position="300"/>
    </location>
</feature>
<feature type="glycosylation site" description="N-linked (GlcNAc...) asparagine" evidence="3">
    <location>
        <position position="1066"/>
    </location>
</feature>
<name>ENAM_MOUSE</name>
<proteinExistence type="evidence at protein level"/>
<comment type="function">
    <text evidence="1">Involved in the mineralization and structural organization of enamel. Involved in the extension of enamel during the secretory stage of dental enamel formation.</text>
</comment>
<comment type="subcellular location">
    <subcellularLocation>
        <location evidence="1">Secreted</location>
        <location evidence="1">Extracellular space</location>
        <location evidence="1">Extracellular matrix</location>
    </subcellularLocation>
</comment>
<comment type="tissue specificity">
    <text evidence="5">Expressed in developing teeth.</text>
</comment>
<comment type="developmental stage">
    <text evidence="6">Expressed in first lower molars at birth.</text>
</comment>
<comment type="PTM">
    <text evidence="2">Phosphorylated by FAM20C in vitro.</text>
</comment>
<keyword id="KW-0091">Biomineralization</keyword>
<keyword id="KW-0272">Extracellular matrix</keyword>
<keyword id="KW-0325">Glycoprotein</keyword>
<keyword id="KW-0597">Phosphoprotein</keyword>
<keyword id="KW-1185">Reference proteome</keyword>
<keyword id="KW-0964">Secreted</keyword>
<keyword id="KW-0732">Signal</keyword>
<gene>
    <name type="primary">Enam</name>
</gene>
<dbReference type="EMBL" id="U82698">
    <property type="protein sequence ID" value="AAB94312.1"/>
    <property type="molecule type" value="mRNA"/>
</dbReference>
<dbReference type="CCDS" id="CCDS19400.1"/>
<dbReference type="PIR" id="T37193">
    <property type="entry name" value="T37193"/>
</dbReference>
<dbReference type="RefSeq" id="NP_059496.1">
    <property type="nucleotide sequence ID" value="NM_017468.3"/>
</dbReference>
<dbReference type="BioGRID" id="199447">
    <property type="interactions" value="1"/>
</dbReference>
<dbReference type="FunCoup" id="O55196">
    <property type="interactions" value="64"/>
</dbReference>
<dbReference type="STRING" id="10090.ENSMUSP00000031222"/>
<dbReference type="GlyCosmos" id="O55196">
    <property type="glycosylation" value="6 sites, No reported glycans"/>
</dbReference>
<dbReference type="GlyGen" id="O55196">
    <property type="glycosylation" value="8 sites"/>
</dbReference>
<dbReference type="iPTMnet" id="O55196"/>
<dbReference type="PhosphoSitePlus" id="O55196"/>
<dbReference type="PaxDb" id="10090-ENSMUSP00000031222"/>
<dbReference type="Antibodypedia" id="24350">
    <property type="antibodies" value="80 antibodies from 14 providers"/>
</dbReference>
<dbReference type="DNASU" id="13801"/>
<dbReference type="Ensembl" id="ENSMUST00000031222.9">
    <property type="protein sequence ID" value="ENSMUSP00000031222.9"/>
    <property type="gene ID" value="ENSMUSG00000029286.13"/>
</dbReference>
<dbReference type="GeneID" id="13801"/>
<dbReference type="KEGG" id="mmu:13801"/>
<dbReference type="UCSC" id="uc008xzt.2">
    <property type="organism name" value="mouse"/>
</dbReference>
<dbReference type="AGR" id="MGI:1333772"/>
<dbReference type="CTD" id="10117"/>
<dbReference type="MGI" id="MGI:1333772">
    <property type="gene designation" value="Enam"/>
</dbReference>
<dbReference type="VEuPathDB" id="HostDB:ENSMUSG00000029286"/>
<dbReference type="eggNOG" id="ENOG502R69E">
    <property type="taxonomic scope" value="Eukaryota"/>
</dbReference>
<dbReference type="GeneTree" id="ENSGT00440000037826"/>
<dbReference type="HOGENOM" id="CLU_280412_0_0_1"/>
<dbReference type="InParanoid" id="O55196"/>
<dbReference type="OMA" id="WNSWDHR"/>
<dbReference type="OrthoDB" id="86758at9989"/>
<dbReference type="PhylomeDB" id="O55196"/>
<dbReference type="TreeFam" id="TF337278"/>
<dbReference type="Reactome" id="R-MMU-381426">
    <property type="pathway name" value="Regulation of Insulin-like Growth Factor (IGF) transport and uptake by Insulin-like Growth Factor Binding Proteins (IGFBPs)"/>
</dbReference>
<dbReference type="Reactome" id="R-MMU-8957275">
    <property type="pathway name" value="Post-translational protein phosphorylation"/>
</dbReference>
<dbReference type="BioGRID-ORCS" id="13801">
    <property type="hits" value="1 hit in 77 CRISPR screens"/>
</dbReference>
<dbReference type="PRO" id="PR:O55196"/>
<dbReference type="Proteomes" id="UP000000589">
    <property type="component" value="Chromosome 5"/>
</dbReference>
<dbReference type="RNAct" id="O55196">
    <property type="molecule type" value="protein"/>
</dbReference>
<dbReference type="Bgee" id="ENSMUSG00000029286">
    <property type="expression patterns" value="Expressed in molar tooth and 11 other cell types or tissues"/>
</dbReference>
<dbReference type="ExpressionAtlas" id="O55196">
    <property type="expression patterns" value="baseline and differential"/>
</dbReference>
<dbReference type="GO" id="GO:0031012">
    <property type="term" value="C:extracellular matrix"/>
    <property type="evidence" value="ECO:0000314"/>
    <property type="project" value="MGI"/>
</dbReference>
<dbReference type="GO" id="GO:0005576">
    <property type="term" value="C:extracellular region"/>
    <property type="evidence" value="ECO:0007669"/>
    <property type="project" value="UniProtKB-KW"/>
</dbReference>
<dbReference type="GO" id="GO:0030345">
    <property type="term" value="F:structural constituent of tooth enamel"/>
    <property type="evidence" value="ECO:0000314"/>
    <property type="project" value="MGI"/>
</dbReference>
<dbReference type="GO" id="GO:0036305">
    <property type="term" value="P:ameloblast differentiation"/>
    <property type="evidence" value="ECO:0000315"/>
    <property type="project" value="MGI"/>
</dbReference>
<dbReference type="GO" id="GO:0097186">
    <property type="term" value="P:amelogenesis"/>
    <property type="evidence" value="ECO:0000315"/>
    <property type="project" value="MGI"/>
</dbReference>
<dbReference type="GO" id="GO:0031214">
    <property type="term" value="P:biomineral tissue development"/>
    <property type="evidence" value="ECO:0007669"/>
    <property type="project" value="UniProtKB-KW"/>
</dbReference>
<dbReference type="GO" id="GO:0042475">
    <property type="term" value="P:odontogenesis of dentin-containing tooth"/>
    <property type="evidence" value="ECO:0000315"/>
    <property type="project" value="MGI"/>
</dbReference>
<dbReference type="GO" id="GO:0070175">
    <property type="term" value="P:positive regulation of enamel mineralization"/>
    <property type="evidence" value="ECO:0000315"/>
    <property type="project" value="MGI"/>
</dbReference>
<dbReference type="GO" id="GO:0022604">
    <property type="term" value="P:regulation of cell morphogenesis"/>
    <property type="evidence" value="ECO:0000315"/>
    <property type="project" value="MGI"/>
</dbReference>
<dbReference type="InterPro" id="IPR015673">
    <property type="entry name" value="Enamelin"/>
</dbReference>
<dbReference type="PANTHER" id="PTHR16784">
    <property type="entry name" value="ENAMELIN"/>
    <property type="match status" value="1"/>
</dbReference>
<dbReference type="PANTHER" id="PTHR16784:SF2">
    <property type="entry name" value="ENAMELIN"/>
    <property type="match status" value="1"/>
</dbReference>
<dbReference type="Pfam" id="PF15362">
    <property type="entry name" value="Enamelin"/>
    <property type="match status" value="2"/>
</dbReference>
<reference key="1">
    <citation type="journal article" date="1998" name="Connect. Tissue Res.">
        <title>Murine enamelin: cDNA and derived protein sequences.</title>
        <authorList>
            <person name="Hu C.-C."/>
            <person name="Simmer J.P."/>
            <person name="Bartlett J.D."/>
            <person name="Nanci A."/>
            <person name="Qian Q."/>
            <person name="Zhang C."/>
            <person name="Ryu O.H."/>
            <person name="Xue J."/>
            <person name="Fukae M."/>
            <person name="Uchida T."/>
            <person name="McDougall M."/>
        </authorList>
    </citation>
    <scope>NUCLEOTIDE SEQUENCE [MRNA]</scope>
    <scope>TISSUE SPECIFICITY</scope>
    <source>
        <strain>Swiss Webster</strain>
        <tissue>Enamel epithelium</tissue>
    </source>
</reference>
<reference key="2">
    <citation type="journal article" date="2004" name="Mol. Cell. Proteomics">
        <title>Phosphoproteomic analysis of the developing mouse brain.</title>
        <authorList>
            <person name="Ballif B.A."/>
            <person name="Villen J."/>
            <person name="Beausoleil S.A."/>
            <person name="Schwartz D."/>
            <person name="Gygi S.P."/>
        </authorList>
    </citation>
    <scope>IDENTIFICATION BY MASS SPECTROMETRY [LARGE SCALE ANALYSIS]</scope>
    <source>
        <tissue>Embryonic brain</tissue>
    </source>
</reference>
<reference key="3">
    <citation type="journal article" date="2011" name="J. Cell Sci.">
        <title>PERP regulates enamel formation via effects on cell-cell adhesion and gene expression.</title>
        <authorList>
            <person name="Jheon A.H."/>
            <person name="Mostowfi P."/>
            <person name="Snead M.L."/>
            <person name="Ihrie R.A."/>
            <person name="Sone E."/>
            <person name="Pramparo T."/>
            <person name="Attardi L.D."/>
            <person name="Klein O.D."/>
        </authorList>
    </citation>
    <scope>DEVELOPMENTAL STAGE</scope>
</reference>
<sequence>MLLLQCRNPTSPPKPCGLVPNVKMSLLVFLGLLGVSAAMPFQMPMPRMPGFSSKSEEMMRYNQFNFMNAPPMMPMGPYGNGMPMPPHMPPQYPPYQMPMWPPPVPNGWQQPPMPNFPSKTDQTQETAKPNQTNPQEPQPQKQPLKEPPNEAARAKDDAQPPQPFPPFGNGLYPYPQPPWPIPQRGPPTAFGRPKFSNEEGNPYYAFFGYHGFGGRPYYSEEMFEDYEKPKEKDPPKPEDPPPDDPPPEASTNSTVPDANATQSIPEGGNDTSPIGNTGPGPNAGNNPTVQNGVFPPPKVNVSGQGVPKSQIPWRPSQPNIYENYPYPNYPSERQWQTTGTQGPRQNGPGYRNPQVERGPQWNSFAWEGKQATRPGNPTYGKPPSPTSGVNYAGNPVHFGRNLPGPNKPFVGANPASNKPFVGANPASNKPFVGANPASNKPFVGANPASNKPFVGANPASNKPYVGANPASNKPFIGANPAANKPSIGTNPAANKPSIGTNPAANKPFVRNNVGANKPFVGTNPSSNQPFLRSNQASNKPFMRSNQASNKPFVGTNVASVGPKQVTVSHNMKTQNPKEKSLGQKERTVTPTKDASNPWRSAKQYGINNPNYNLPRSEGSMVGPNFNSFDQQENSYFSKGASKRVPSPNIQIQSQNLPKGIALEPRRTPFQSETKKPELKHGTHQPAYPKKIPSPTRKHFPAERNTWNRQKILPPLKEDYGRQDENLRHPSYGSRGNIFYHEYTNPYHNEKSQYIKSNPWDKSSPSTMMRPENPQYTMTSLDQKETEQYNEEDPIDPNEDESFPGQSRWGDEEMNFKGNPTVRQYEGEHYASTLAKEYLPYSLSNPPKPSEDFPYSEFYPWNPQETFPIYNPGPTIAPPVDPRSYYVNNAIGQEESTLFPSWTSWDHRNQAERQKESEPYFNRNVWDQSINLHKSNIPNHPYSTTSPARFPKDPTWFEGENLNYDLQITSLSPPEREQLAFPDFLPQSYPTGQNEAHLFHQSQRGSCCIGGSTGHKDNVLALQDYTSSYGLPPRKNQETSPVHTESSYIKYARPNVSPASILPSQRNISENKLTAESPNPSPFGDGVPTVRKNTPYSGKNQLETGIVAFSEASSSQPKNTPCLKSDLGGDRRDVLKQFFEGSQLSERTAGLTPEQLVIGIPDKGSGPDSIQSEVQGKEGEMQQQRPPTIMKLPCFGSNSKFHSSTTGPPINNRRPTLLNGALSTPTESPNTLVGLATREQLKSINVDKLNADEHTTLESFQGTSPQDQGCLLLQA</sequence>
<evidence type="ECO:0000250" key="1">
    <source>
        <dbReference type="UniProtKB" id="O97939"/>
    </source>
</evidence>
<evidence type="ECO:0000250" key="2">
    <source>
        <dbReference type="UniProtKB" id="Q9NRM1"/>
    </source>
</evidence>
<evidence type="ECO:0000255" key="3"/>
<evidence type="ECO:0000256" key="4">
    <source>
        <dbReference type="SAM" id="MobiDB-lite"/>
    </source>
</evidence>
<evidence type="ECO:0000269" key="5">
    <source>
    </source>
</evidence>
<evidence type="ECO:0000269" key="6">
    <source>
    </source>
</evidence>
<protein>
    <recommendedName>
        <fullName>Enamelin</fullName>
    </recommendedName>
</protein>
<organism>
    <name type="scientific">Mus musculus</name>
    <name type="common">Mouse</name>
    <dbReference type="NCBI Taxonomy" id="10090"/>
    <lineage>
        <taxon>Eukaryota</taxon>
        <taxon>Metazoa</taxon>
        <taxon>Chordata</taxon>
        <taxon>Craniata</taxon>
        <taxon>Vertebrata</taxon>
        <taxon>Euteleostomi</taxon>
        <taxon>Mammalia</taxon>
        <taxon>Eutheria</taxon>
        <taxon>Euarchontoglires</taxon>
        <taxon>Glires</taxon>
        <taxon>Rodentia</taxon>
        <taxon>Myomorpha</taxon>
        <taxon>Muroidea</taxon>
        <taxon>Muridae</taxon>
        <taxon>Murinae</taxon>
        <taxon>Mus</taxon>
        <taxon>Mus</taxon>
    </lineage>
</organism>